<name>PYRB_ACIAD</name>
<sequence length="338" mass="37189">MHLAALHTPSQIQLNQQGNLKHFLTIEGLSKETLTKILDTAQSFINDQNQLITTPLLEGRTVMNLFFENSTRTRTTFEAAAKRLSANVLNIDIARSSTSKGETLRDTLWNLEAMAADIFVVRHSSSGAAHFIAKDVCPHVAIINAGDGRHAHPTQAMLDMLTIRRETKKPFEELSVAIIGDIKHSRVARSNIAALQTLGCNDIRVIAPNTLLPVGFKEYGDHVRLFNKMDDGVKDCDVIIALRIQNERIDSPALSSQAEFYRMYGLNQERLALAKPDCIVMHPGPMNRGVEIDSSIADGPQSVILHQVTNGIAVRMAVLALSMQGQLQEQGLIEAIAV</sequence>
<protein>
    <recommendedName>
        <fullName evidence="1">Aspartate carbamoyltransferase catalytic subunit</fullName>
        <ecNumber evidence="1">2.1.3.2</ecNumber>
    </recommendedName>
    <alternativeName>
        <fullName evidence="1">Aspartate transcarbamylase</fullName>
        <shortName evidence="1">ATCase</shortName>
    </alternativeName>
</protein>
<organism>
    <name type="scientific">Acinetobacter baylyi (strain ATCC 33305 / BD413 / ADP1)</name>
    <dbReference type="NCBI Taxonomy" id="62977"/>
    <lineage>
        <taxon>Bacteria</taxon>
        <taxon>Pseudomonadati</taxon>
        <taxon>Pseudomonadota</taxon>
        <taxon>Gammaproteobacteria</taxon>
        <taxon>Moraxellales</taxon>
        <taxon>Moraxellaceae</taxon>
        <taxon>Acinetobacter</taxon>
    </lineage>
</organism>
<comment type="function">
    <text evidence="1">Catalyzes the condensation of carbamoyl phosphate and aspartate to form carbamoyl aspartate and inorganic phosphate, the committed step in the de novo pyrimidine nucleotide biosynthesis pathway.</text>
</comment>
<comment type="catalytic activity">
    <reaction evidence="1">
        <text>carbamoyl phosphate + L-aspartate = N-carbamoyl-L-aspartate + phosphate + H(+)</text>
        <dbReference type="Rhea" id="RHEA:20013"/>
        <dbReference type="ChEBI" id="CHEBI:15378"/>
        <dbReference type="ChEBI" id="CHEBI:29991"/>
        <dbReference type="ChEBI" id="CHEBI:32814"/>
        <dbReference type="ChEBI" id="CHEBI:43474"/>
        <dbReference type="ChEBI" id="CHEBI:58228"/>
        <dbReference type="EC" id="2.1.3.2"/>
    </reaction>
</comment>
<comment type="pathway">
    <text evidence="1">Pyrimidine metabolism; UMP biosynthesis via de novo pathway; (S)-dihydroorotate from bicarbonate: step 2/3.</text>
</comment>
<comment type="subunit">
    <text evidence="1">Heterododecamer (2C3:3R2) of six catalytic PyrB chains organized as two trimers (C3), and six regulatory PyrI chains organized as three dimers (R2).</text>
</comment>
<comment type="similarity">
    <text evidence="1">Belongs to the aspartate/ornithine carbamoyltransferase superfamily. ATCase family.</text>
</comment>
<accession>Q6FCR5</accession>
<keyword id="KW-0665">Pyrimidine biosynthesis</keyword>
<keyword id="KW-0808">Transferase</keyword>
<dbReference type="EC" id="2.1.3.2" evidence="1"/>
<dbReference type="EMBL" id="CR543861">
    <property type="protein sequence ID" value="CAG68144.1"/>
    <property type="molecule type" value="Genomic_DNA"/>
</dbReference>
<dbReference type="RefSeq" id="WP_004925925.1">
    <property type="nucleotide sequence ID" value="NC_005966.1"/>
</dbReference>
<dbReference type="SMR" id="Q6FCR5"/>
<dbReference type="STRING" id="202950.GCA_001485005_01033"/>
<dbReference type="GeneID" id="45233691"/>
<dbReference type="KEGG" id="aci:ACIAD1270"/>
<dbReference type="eggNOG" id="COG0540">
    <property type="taxonomic scope" value="Bacteria"/>
</dbReference>
<dbReference type="HOGENOM" id="CLU_043846_2_0_6"/>
<dbReference type="OrthoDB" id="9774690at2"/>
<dbReference type="BioCyc" id="ASP62977:ACIAD_RS05845-MONOMER"/>
<dbReference type="UniPathway" id="UPA00070">
    <property type="reaction ID" value="UER00116"/>
</dbReference>
<dbReference type="Proteomes" id="UP000000430">
    <property type="component" value="Chromosome"/>
</dbReference>
<dbReference type="GO" id="GO:0005829">
    <property type="term" value="C:cytosol"/>
    <property type="evidence" value="ECO:0007669"/>
    <property type="project" value="TreeGrafter"/>
</dbReference>
<dbReference type="GO" id="GO:0016597">
    <property type="term" value="F:amino acid binding"/>
    <property type="evidence" value="ECO:0007669"/>
    <property type="project" value="InterPro"/>
</dbReference>
<dbReference type="GO" id="GO:0004070">
    <property type="term" value="F:aspartate carbamoyltransferase activity"/>
    <property type="evidence" value="ECO:0007669"/>
    <property type="project" value="UniProtKB-UniRule"/>
</dbReference>
<dbReference type="GO" id="GO:0006207">
    <property type="term" value="P:'de novo' pyrimidine nucleobase biosynthetic process"/>
    <property type="evidence" value="ECO:0007669"/>
    <property type="project" value="InterPro"/>
</dbReference>
<dbReference type="GO" id="GO:0044205">
    <property type="term" value="P:'de novo' UMP biosynthetic process"/>
    <property type="evidence" value="ECO:0007669"/>
    <property type="project" value="UniProtKB-UniRule"/>
</dbReference>
<dbReference type="GO" id="GO:0006520">
    <property type="term" value="P:amino acid metabolic process"/>
    <property type="evidence" value="ECO:0007669"/>
    <property type="project" value="InterPro"/>
</dbReference>
<dbReference type="FunFam" id="3.40.50.1370:FF:000007">
    <property type="entry name" value="Aspartate carbamoyltransferase"/>
    <property type="match status" value="1"/>
</dbReference>
<dbReference type="Gene3D" id="3.40.50.1370">
    <property type="entry name" value="Aspartate/ornithine carbamoyltransferase"/>
    <property type="match status" value="2"/>
</dbReference>
<dbReference type="HAMAP" id="MF_00001">
    <property type="entry name" value="Asp_carb_tr"/>
    <property type="match status" value="1"/>
</dbReference>
<dbReference type="InterPro" id="IPR006132">
    <property type="entry name" value="Asp/Orn_carbamoyltranf_P-bd"/>
</dbReference>
<dbReference type="InterPro" id="IPR006130">
    <property type="entry name" value="Asp/Orn_carbamoylTrfase"/>
</dbReference>
<dbReference type="InterPro" id="IPR036901">
    <property type="entry name" value="Asp/Orn_carbamoylTrfase_sf"/>
</dbReference>
<dbReference type="InterPro" id="IPR002082">
    <property type="entry name" value="Asp_carbamoyltransf"/>
</dbReference>
<dbReference type="InterPro" id="IPR006131">
    <property type="entry name" value="Asp_carbamoyltransf_Asp/Orn-bd"/>
</dbReference>
<dbReference type="NCBIfam" id="TIGR00670">
    <property type="entry name" value="asp_carb_tr"/>
    <property type="match status" value="1"/>
</dbReference>
<dbReference type="NCBIfam" id="NF002032">
    <property type="entry name" value="PRK00856.1"/>
    <property type="match status" value="1"/>
</dbReference>
<dbReference type="PANTHER" id="PTHR45753:SF6">
    <property type="entry name" value="ASPARTATE CARBAMOYLTRANSFERASE"/>
    <property type="match status" value="1"/>
</dbReference>
<dbReference type="PANTHER" id="PTHR45753">
    <property type="entry name" value="ORNITHINE CARBAMOYLTRANSFERASE, MITOCHONDRIAL"/>
    <property type="match status" value="1"/>
</dbReference>
<dbReference type="Pfam" id="PF00185">
    <property type="entry name" value="OTCace"/>
    <property type="match status" value="1"/>
</dbReference>
<dbReference type="Pfam" id="PF02729">
    <property type="entry name" value="OTCace_N"/>
    <property type="match status" value="1"/>
</dbReference>
<dbReference type="PRINTS" id="PR00100">
    <property type="entry name" value="AOTCASE"/>
</dbReference>
<dbReference type="PRINTS" id="PR00101">
    <property type="entry name" value="ATCASE"/>
</dbReference>
<dbReference type="SUPFAM" id="SSF53671">
    <property type="entry name" value="Aspartate/ornithine carbamoyltransferase"/>
    <property type="match status" value="1"/>
</dbReference>
<dbReference type="PROSITE" id="PS00097">
    <property type="entry name" value="CARBAMOYLTRANSFERASE"/>
    <property type="match status" value="1"/>
</dbReference>
<reference key="1">
    <citation type="journal article" date="2004" name="Nucleic Acids Res.">
        <title>Unique features revealed by the genome sequence of Acinetobacter sp. ADP1, a versatile and naturally transformation competent bacterium.</title>
        <authorList>
            <person name="Barbe V."/>
            <person name="Vallenet D."/>
            <person name="Fonknechten N."/>
            <person name="Kreimeyer A."/>
            <person name="Oztas S."/>
            <person name="Labarre L."/>
            <person name="Cruveiller S."/>
            <person name="Robert C."/>
            <person name="Duprat S."/>
            <person name="Wincker P."/>
            <person name="Ornston L.N."/>
            <person name="Weissenbach J."/>
            <person name="Marliere P."/>
            <person name="Cohen G.N."/>
            <person name="Medigue C."/>
        </authorList>
    </citation>
    <scope>NUCLEOTIDE SEQUENCE [LARGE SCALE GENOMIC DNA]</scope>
    <source>
        <strain>ATCC 33305 / BD413 / ADP1</strain>
    </source>
</reference>
<gene>
    <name evidence="1" type="primary">pyrB</name>
    <name type="ordered locus">ACIAD1270</name>
</gene>
<proteinExistence type="inferred from homology"/>
<feature type="chain" id="PRO_0000113083" description="Aspartate carbamoyltransferase catalytic subunit">
    <location>
        <begin position="1"/>
        <end position="338"/>
    </location>
</feature>
<feature type="binding site" evidence="1">
    <location>
        <position position="72"/>
    </location>
    <ligand>
        <name>carbamoyl phosphate</name>
        <dbReference type="ChEBI" id="CHEBI:58228"/>
    </ligand>
</feature>
<feature type="binding site" evidence="1">
    <location>
        <position position="73"/>
    </location>
    <ligand>
        <name>carbamoyl phosphate</name>
        <dbReference type="ChEBI" id="CHEBI:58228"/>
    </ligand>
</feature>
<feature type="binding site" evidence="1">
    <location>
        <position position="100"/>
    </location>
    <ligand>
        <name>L-aspartate</name>
        <dbReference type="ChEBI" id="CHEBI:29991"/>
    </ligand>
</feature>
<feature type="binding site" evidence="1">
    <location>
        <position position="122"/>
    </location>
    <ligand>
        <name>carbamoyl phosphate</name>
        <dbReference type="ChEBI" id="CHEBI:58228"/>
    </ligand>
</feature>
<feature type="binding site" evidence="1">
    <location>
        <position position="152"/>
    </location>
    <ligand>
        <name>carbamoyl phosphate</name>
        <dbReference type="ChEBI" id="CHEBI:58228"/>
    </ligand>
</feature>
<feature type="binding site" evidence="1">
    <location>
        <position position="155"/>
    </location>
    <ligand>
        <name>carbamoyl phosphate</name>
        <dbReference type="ChEBI" id="CHEBI:58228"/>
    </ligand>
</feature>
<feature type="binding site" evidence="1">
    <location>
        <position position="186"/>
    </location>
    <ligand>
        <name>L-aspartate</name>
        <dbReference type="ChEBI" id="CHEBI:29991"/>
    </ligand>
</feature>
<feature type="binding site" evidence="1">
    <location>
        <position position="243"/>
    </location>
    <ligand>
        <name>L-aspartate</name>
        <dbReference type="ChEBI" id="CHEBI:29991"/>
    </ligand>
</feature>
<feature type="binding site" evidence="1">
    <location>
        <position position="284"/>
    </location>
    <ligand>
        <name>carbamoyl phosphate</name>
        <dbReference type="ChEBI" id="CHEBI:58228"/>
    </ligand>
</feature>
<feature type="binding site" evidence="1">
    <location>
        <position position="285"/>
    </location>
    <ligand>
        <name>carbamoyl phosphate</name>
        <dbReference type="ChEBI" id="CHEBI:58228"/>
    </ligand>
</feature>
<evidence type="ECO:0000255" key="1">
    <source>
        <dbReference type="HAMAP-Rule" id="MF_00001"/>
    </source>
</evidence>